<feature type="chain" id="PRO_1000011389" description="Ribonuclease T">
    <location>
        <begin position="1"/>
        <end position="215"/>
    </location>
</feature>
<feature type="domain" description="Exonuclease" evidence="1">
    <location>
        <begin position="20"/>
        <end position="194"/>
    </location>
</feature>
<feature type="active site" description="Proton donor/acceptor" evidence="1">
    <location>
        <position position="181"/>
    </location>
</feature>
<feature type="binding site" evidence="1">
    <location>
        <position position="23"/>
    </location>
    <ligand>
        <name>Mg(2+)</name>
        <dbReference type="ChEBI" id="CHEBI:18420"/>
        <label>1</label>
        <note>catalytic</note>
    </ligand>
</feature>
<feature type="binding site" evidence="1">
    <location>
        <position position="23"/>
    </location>
    <ligand>
        <name>Mg(2+)</name>
        <dbReference type="ChEBI" id="CHEBI:18420"/>
        <label>2</label>
        <note>catalytic</note>
    </ligand>
</feature>
<feature type="binding site" evidence="1">
    <location>
        <position position="25"/>
    </location>
    <ligand>
        <name>Mg(2+)</name>
        <dbReference type="ChEBI" id="CHEBI:18420"/>
        <label>2</label>
        <note>catalytic</note>
    </ligand>
</feature>
<feature type="binding site" evidence="1">
    <location>
        <position position="181"/>
    </location>
    <ligand>
        <name>Mg(2+)</name>
        <dbReference type="ChEBI" id="CHEBI:18420"/>
        <label>2</label>
        <note>catalytic</note>
    </ligand>
</feature>
<feature type="binding site" evidence="1">
    <location>
        <position position="186"/>
    </location>
    <ligand>
        <name>Mg(2+)</name>
        <dbReference type="ChEBI" id="CHEBI:18420"/>
        <label>2</label>
        <note>catalytic</note>
    </ligand>
</feature>
<feature type="site" description="Important for substrate binding and specificity" evidence="1">
    <location>
        <position position="29"/>
    </location>
</feature>
<feature type="site" description="Important for substrate binding and specificity" evidence="1">
    <location>
        <position position="77"/>
    </location>
</feature>
<feature type="site" description="Important for substrate binding and specificity" evidence="1">
    <location>
        <position position="124"/>
    </location>
</feature>
<feature type="site" description="Important for substrate binding and specificity" evidence="1">
    <location>
        <position position="146"/>
    </location>
</feature>
<keyword id="KW-0269">Exonuclease</keyword>
<keyword id="KW-0378">Hydrolase</keyword>
<keyword id="KW-0460">Magnesium</keyword>
<keyword id="KW-0479">Metal-binding</keyword>
<keyword id="KW-0540">Nuclease</keyword>
<keyword id="KW-1185">Reference proteome</keyword>
<keyword id="KW-0819">tRNA processing</keyword>
<comment type="function">
    <text evidence="1">Trims short 3' overhangs of a variety of RNA species, leaving a one or two nucleotide 3' overhang. Responsible for the end-turnover of tRNA: specifically removes the terminal AMP residue from uncharged tRNA (tRNA-C-C-A). Also appears to be involved in tRNA biosynthesis.</text>
</comment>
<comment type="cofactor">
    <cofactor evidence="1">
        <name>Mg(2+)</name>
        <dbReference type="ChEBI" id="CHEBI:18420"/>
    </cofactor>
    <text evidence="1">Binds two Mg(2+) per subunit. The active form of the enzyme binds two Mg(2+) ions in its active site. The first Mg(2+) forms only one salt bridge with the protein.</text>
</comment>
<comment type="subunit">
    <text evidence="1">Homodimer.</text>
</comment>
<comment type="similarity">
    <text evidence="1">Belongs to the RNase T family.</text>
</comment>
<sequence length="215" mass="23505">MSDNAQLSGLCDRFRGFYPVVIDVETAGFNAKTDALLEVAAITLKMDEQGWLMPDTTLHFHVEPFEGANLQPEALAFNGIDPSNPLRGAVSEYDALHAIFKMVRKGIKDSGCNRAIMVAHNATFDHSFMMAAAERASLKRNPFHPFVTFDTAALSGLALGQTVLSKACLAAGMEFDGTQAHSALYDTERTAVLFCEIVNRWKRLGGWPLPVPEEA</sequence>
<accession>A8AH33</accession>
<reference key="1">
    <citation type="submission" date="2007-08" db="EMBL/GenBank/DDBJ databases">
        <authorList>
            <consortium name="The Citrobacter koseri Genome Sequencing Project"/>
            <person name="McClelland M."/>
            <person name="Sanderson E.K."/>
            <person name="Porwollik S."/>
            <person name="Spieth J."/>
            <person name="Clifton W.S."/>
            <person name="Latreille P."/>
            <person name="Courtney L."/>
            <person name="Wang C."/>
            <person name="Pepin K."/>
            <person name="Bhonagiri V."/>
            <person name="Nash W."/>
            <person name="Johnson M."/>
            <person name="Thiruvilangam P."/>
            <person name="Wilson R."/>
        </authorList>
    </citation>
    <scope>NUCLEOTIDE SEQUENCE [LARGE SCALE GENOMIC DNA]</scope>
    <source>
        <strain>ATCC BAA-895 / CDC 4225-83 / SGSC4696</strain>
    </source>
</reference>
<evidence type="ECO:0000255" key="1">
    <source>
        <dbReference type="HAMAP-Rule" id="MF_00157"/>
    </source>
</evidence>
<organism>
    <name type="scientific">Citrobacter koseri (strain ATCC BAA-895 / CDC 4225-83 / SGSC4696)</name>
    <dbReference type="NCBI Taxonomy" id="290338"/>
    <lineage>
        <taxon>Bacteria</taxon>
        <taxon>Pseudomonadati</taxon>
        <taxon>Pseudomonadota</taxon>
        <taxon>Gammaproteobacteria</taxon>
        <taxon>Enterobacterales</taxon>
        <taxon>Enterobacteriaceae</taxon>
        <taxon>Citrobacter</taxon>
    </lineage>
</organism>
<dbReference type="EC" id="3.1.13.-" evidence="1"/>
<dbReference type="EMBL" id="CP000822">
    <property type="protein sequence ID" value="ABV12796.1"/>
    <property type="molecule type" value="Genomic_DNA"/>
</dbReference>
<dbReference type="RefSeq" id="WP_012132536.1">
    <property type="nucleotide sequence ID" value="NC_009792.1"/>
</dbReference>
<dbReference type="SMR" id="A8AH33"/>
<dbReference type="STRING" id="290338.CKO_01664"/>
<dbReference type="GeneID" id="45135706"/>
<dbReference type="KEGG" id="cko:CKO_01664"/>
<dbReference type="HOGENOM" id="CLU_082724_0_0_6"/>
<dbReference type="OrthoDB" id="9778264at2"/>
<dbReference type="Proteomes" id="UP000008148">
    <property type="component" value="Chromosome"/>
</dbReference>
<dbReference type="GO" id="GO:0005829">
    <property type="term" value="C:cytosol"/>
    <property type="evidence" value="ECO:0007669"/>
    <property type="project" value="TreeGrafter"/>
</dbReference>
<dbReference type="GO" id="GO:0008408">
    <property type="term" value="F:3'-5' exonuclease activity"/>
    <property type="evidence" value="ECO:0007669"/>
    <property type="project" value="TreeGrafter"/>
</dbReference>
<dbReference type="GO" id="GO:0000287">
    <property type="term" value="F:magnesium ion binding"/>
    <property type="evidence" value="ECO:0007669"/>
    <property type="project" value="UniProtKB-UniRule"/>
</dbReference>
<dbReference type="GO" id="GO:0003676">
    <property type="term" value="F:nucleic acid binding"/>
    <property type="evidence" value="ECO:0007669"/>
    <property type="project" value="InterPro"/>
</dbReference>
<dbReference type="GO" id="GO:0016896">
    <property type="term" value="F:RNA exonuclease activity, producing 5'-phosphomonoesters"/>
    <property type="evidence" value="ECO:0007669"/>
    <property type="project" value="UniProtKB-UniRule"/>
</dbReference>
<dbReference type="GO" id="GO:0045004">
    <property type="term" value="P:DNA replication proofreading"/>
    <property type="evidence" value="ECO:0007669"/>
    <property type="project" value="TreeGrafter"/>
</dbReference>
<dbReference type="GO" id="GO:0008033">
    <property type="term" value="P:tRNA processing"/>
    <property type="evidence" value="ECO:0007669"/>
    <property type="project" value="UniProtKB-KW"/>
</dbReference>
<dbReference type="CDD" id="cd06134">
    <property type="entry name" value="RNaseT"/>
    <property type="match status" value="1"/>
</dbReference>
<dbReference type="FunFam" id="3.30.420.10:FF:000009">
    <property type="entry name" value="Ribonuclease T"/>
    <property type="match status" value="1"/>
</dbReference>
<dbReference type="Gene3D" id="3.30.420.10">
    <property type="entry name" value="Ribonuclease H-like superfamily/Ribonuclease H"/>
    <property type="match status" value="1"/>
</dbReference>
<dbReference type="HAMAP" id="MF_00157">
    <property type="entry name" value="RNase_T"/>
    <property type="match status" value="1"/>
</dbReference>
<dbReference type="InterPro" id="IPR013520">
    <property type="entry name" value="Exonuclease_RNaseT/DNA_pol3"/>
</dbReference>
<dbReference type="InterPro" id="IPR005987">
    <property type="entry name" value="RNase_T"/>
</dbReference>
<dbReference type="InterPro" id="IPR012337">
    <property type="entry name" value="RNaseH-like_sf"/>
</dbReference>
<dbReference type="InterPro" id="IPR036397">
    <property type="entry name" value="RNaseH_sf"/>
</dbReference>
<dbReference type="NCBIfam" id="TIGR01298">
    <property type="entry name" value="RNaseT"/>
    <property type="match status" value="1"/>
</dbReference>
<dbReference type="PANTHER" id="PTHR30231">
    <property type="entry name" value="DNA POLYMERASE III SUBUNIT EPSILON"/>
    <property type="match status" value="1"/>
</dbReference>
<dbReference type="PANTHER" id="PTHR30231:SF2">
    <property type="entry name" value="RIBONUCLEASE T"/>
    <property type="match status" value="1"/>
</dbReference>
<dbReference type="Pfam" id="PF00929">
    <property type="entry name" value="RNase_T"/>
    <property type="match status" value="1"/>
</dbReference>
<dbReference type="SMART" id="SM00479">
    <property type="entry name" value="EXOIII"/>
    <property type="match status" value="1"/>
</dbReference>
<dbReference type="SUPFAM" id="SSF53098">
    <property type="entry name" value="Ribonuclease H-like"/>
    <property type="match status" value="1"/>
</dbReference>
<protein>
    <recommendedName>
        <fullName evidence="1">Ribonuclease T</fullName>
        <ecNumber evidence="1">3.1.13.-</ecNumber>
    </recommendedName>
    <alternativeName>
        <fullName evidence="1">Exoribonuclease T</fullName>
        <shortName evidence="1">RNase T</shortName>
    </alternativeName>
</protein>
<gene>
    <name evidence="1" type="primary">rnt</name>
    <name type="ordered locus">CKO_01664</name>
</gene>
<proteinExistence type="inferred from homology"/>
<name>RNT_CITK8</name>